<evidence type="ECO:0000255" key="1">
    <source>
        <dbReference type="HAMAP-Rule" id="MF_01384"/>
    </source>
</evidence>
<name>URED_YERP3</name>
<protein>
    <recommendedName>
        <fullName evidence="1">Urease accessory protein UreD</fullName>
    </recommendedName>
</protein>
<dbReference type="EMBL" id="CP000720">
    <property type="protein sequence ID" value="ABS47091.1"/>
    <property type="molecule type" value="Genomic_DNA"/>
</dbReference>
<dbReference type="RefSeq" id="WP_011192842.1">
    <property type="nucleotide sequence ID" value="NC_009708.1"/>
</dbReference>
<dbReference type="SMR" id="A7FFN6"/>
<dbReference type="KEGG" id="ypi:YpsIP31758_1083"/>
<dbReference type="HOGENOM" id="CLU_056339_1_0_6"/>
<dbReference type="Proteomes" id="UP000002412">
    <property type="component" value="Chromosome"/>
</dbReference>
<dbReference type="GO" id="GO:0005737">
    <property type="term" value="C:cytoplasm"/>
    <property type="evidence" value="ECO:0007669"/>
    <property type="project" value="UniProtKB-SubCell"/>
</dbReference>
<dbReference type="GO" id="GO:0016151">
    <property type="term" value="F:nickel cation binding"/>
    <property type="evidence" value="ECO:0007669"/>
    <property type="project" value="UniProtKB-UniRule"/>
</dbReference>
<dbReference type="HAMAP" id="MF_01384">
    <property type="entry name" value="UreD"/>
    <property type="match status" value="1"/>
</dbReference>
<dbReference type="InterPro" id="IPR002669">
    <property type="entry name" value="UreD"/>
</dbReference>
<dbReference type="PANTHER" id="PTHR33643">
    <property type="entry name" value="UREASE ACCESSORY PROTEIN D"/>
    <property type="match status" value="1"/>
</dbReference>
<dbReference type="PANTHER" id="PTHR33643:SF1">
    <property type="entry name" value="UREASE ACCESSORY PROTEIN D"/>
    <property type="match status" value="1"/>
</dbReference>
<dbReference type="Pfam" id="PF01774">
    <property type="entry name" value="UreD"/>
    <property type="match status" value="1"/>
</dbReference>
<keyword id="KW-0143">Chaperone</keyword>
<keyword id="KW-0963">Cytoplasm</keyword>
<keyword id="KW-0996">Nickel insertion</keyword>
<organism>
    <name type="scientific">Yersinia pseudotuberculosis serotype O:1b (strain IP 31758)</name>
    <dbReference type="NCBI Taxonomy" id="349747"/>
    <lineage>
        <taxon>Bacteria</taxon>
        <taxon>Pseudomonadati</taxon>
        <taxon>Pseudomonadota</taxon>
        <taxon>Gammaproteobacteria</taxon>
        <taxon>Enterobacterales</taxon>
        <taxon>Yersiniaceae</taxon>
        <taxon>Yersinia</taxon>
    </lineage>
</organism>
<comment type="function">
    <text evidence="1">Required for maturation of urease via the functional incorporation of the urease nickel metallocenter.</text>
</comment>
<comment type="subunit">
    <text evidence="1">UreD, UreF and UreG form a complex that acts as a GTP-hydrolysis-dependent molecular chaperone, activating the urease apoprotein by helping to assemble the nickel containing metallocenter of UreC. The UreE protein probably delivers the nickel.</text>
</comment>
<comment type="subcellular location">
    <subcellularLocation>
        <location evidence="1">Cytoplasm</location>
    </subcellularLocation>
</comment>
<comment type="similarity">
    <text evidence="1">Belongs to the UreD family.</text>
</comment>
<gene>
    <name evidence="1" type="primary">ureD</name>
    <name type="ordered locus">YpsIP31758_1083</name>
</gene>
<sequence>MTAQSQNIVETPSRVRAHALGVNAPELAKYQDEPAQMRSGAVGKSGYLKLRFAKREHRSILAEMERRVPSLVQKALYWDEEIPELPCVTMISTSGCILQGDRLATDVHVEAGACAHVTTQSATKVHMMNANYASQIQNFIVEEGGYLEFMPDPLIPHRNSRFITDTTISIHPTATAIYSEVLMSGRKYHHADERFGFDVYSSRVAAQNLAGKELFVEKYVLEPKVESLDAVGVMQTFDAFGNVILLTPKEHHDRILARVPAHFDIKGGIASGATRLPNDCGLVFKALGIDSAGVKAEIRQFWKIAREEILGVTLPEQFLWR</sequence>
<accession>A7FFN6</accession>
<feature type="chain" id="PRO_0000340534" description="Urease accessory protein UreD">
    <location>
        <begin position="1"/>
        <end position="321"/>
    </location>
</feature>
<reference key="1">
    <citation type="journal article" date="2007" name="PLoS Genet.">
        <title>The complete genome sequence of Yersinia pseudotuberculosis IP31758, the causative agent of Far East scarlet-like fever.</title>
        <authorList>
            <person name="Eppinger M."/>
            <person name="Rosovitz M.J."/>
            <person name="Fricke W.F."/>
            <person name="Rasko D.A."/>
            <person name="Kokorina G."/>
            <person name="Fayolle C."/>
            <person name="Lindler L.E."/>
            <person name="Carniel E."/>
            <person name="Ravel J."/>
        </authorList>
    </citation>
    <scope>NUCLEOTIDE SEQUENCE [LARGE SCALE GENOMIC DNA]</scope>
    <source>
        <strain>IP 31758</strain>
    </source>
</reference>
<proteinExistence type="inferred from homology"/>